<comment type="function">
    <text>Component of the pyruvate dehydrogenase (PDH) complex, that catalyzes the overall conversion of pyruvate to acetyl-CoA and CO(2).</text>
</comment>
<comment type="catalytic activity">
    <reaction>
        <text>N(6)-[(R)-lipoyl]-L-lysyl-[protein] + pyruvate + H(+) = N(6)-[(R)-S(8)-acetyldihydrolipoyl]-L-lysyl-[protein] + CO2</text>
        <dbReference type="Rhea" id="RHEA:19189"/>
        <dbReference type="Rhea" id="RHEA-COMP:10474"/>
        <dbReference type="Rhea" id="RHEA-COMP:10478"/>
        <dbReference type="ChEBI" id="CHEBI:15361"/>
        <dbReference type="ChEBI" id="CHEBI:15378"/>
        <dbReference type="ChEBI" id="CHEBI:16526"/>
        <dbReference type="ChEBI" id="CHEBI:83099"/>
        <dbReference type="ChEBI" id="CHEBI:83111"/>
        <dbReference type="EC" id="1.2.4.1"/>
    </reaction>
</comment>
<comment type="cofactor">
    <cofactor>
        <name>Mg(2+)</name>
        <dbReference type="ChEBI" id="CHEBI:18420"/>
    </cofactor>
</comment>
<comment type="cofactor">
    <cofactor>
        <name>thiamine diphosphate</name>
        <dbReference type="ChEBI" id="CHEBI:58937"/>
    </cofactor>
</comment>
<comment type="subunit">
    <text evidence="1 3 6 7">Homodimer (PubMed:11955070). Part of the PDH complex, consisting of multiple copies of pyruvate dehydrogenase (E1), dihydrolipoamide acetyltransferase (E2) and lipoamide dehydrogenase (E3) (Probable). In pull-down experiments interacts with CedA (PubMed:28818726).</text>
</comment>
<comment type="interaction">
    <interactant intactId="EBI-542683">
        <id>P0AFG8</id>
    </interactant>
    <interactant intactId="EBI-542683">
        <id>P0AFG8</id>
        <label>aceE</label>
    </interactant>
    <organismsDiffer>false</organismsDiffer>
    <experiments>2</experiments>
</comment>
<comment type="interaction">
    <interactant intactId="EBI-542683">
        <id>P0AFG8</id>
    </interactant>
    <interactant intactId="EBI-562598">
        <id>P0A8N7</id>
        <label>epmA</label>
    </interactant>
    <organismsDiffer>false</organismsDiffer>
    <experiments>2</experiments>
</comment>
<comment type="interaction">
    <interactant intactId="EBI-542683">
        <id>P0AFG8</id>
    </interactant>
    <interactant intactId="EBI-545399">
        <id>P77439</id>
        <label>fryA</label>
    </interactant>
    <organismsDiffer>false</organismsDiffer>
    <experiments>2</experiments>
</comment>
<comment type="interaction">
    <interactant intactId="EBI-542683">
        <id>P0AFG8</id>
    </interactant>
    <interactant intactId="EBI-550795">
        <id>P46889</id>
        <label>ftsK</label>
    </interactant>
    <organismsDiffer>false</organismsDiffer>
    <experiments>2</experiments>
</comment>
<comment type="interaction">
    <interactant intactId="EBI-542683">
        <id>P0AFG8</id>
    </interactant>
    <interactant intactId="EBI-543750">
        <id>P0A6F5</id>
        <label>groEL</label>
    </interactant>
    <organismsDiffer>false</organismsDiffer>
    <experiments>3</experiments>
</comment>
<comment type="interaction">
    <interactant intactId="EBI-542683">
        <id>P0AFG8</id>
    </interactant>
    <interactant intactId="EBI-552628">
        <id>P0AEV9</id>
        <label>hycI</label>
    </interactant>
    <organismsDiffer>false</organismsDiffer>
    <experiments>2</experiments>
</comment>
<comment type="interaction">
    <interactant intactId="EBI-542683">
        <id>P0AFG8</id>
    </interactant>
    <interactant intactId="EBI-555213">
        <id>P0AB83</id>
        <label>nth</label>
    </interactant>
    <organismsDiffer>false</organismsDiffer>
    <experiments>3</experiments>
</comment>
<comment type="interaction">
    <interactant intactId="EBI-542683">
        <id>P0AFG8</id>
    </interactant>
    <interactant intactId="EBI-556534">
        <id>P0AB89</id>
        <label>purB</label>
    </interactant>
    <organismsDiffer>false</organismsDiffer>
    <experiments>2</experiments>
</comment>
<comment type="interaction">
    <interactant intactId="EBI-542683">
        <id>P0AFG8</id>
    </interactant>
    <interactant intactId="EBI-542969">
        <id>P0AG40</id>
        <label>ribF</label>
    </interactant>
    <organismsDiffer>false</organismsDiffer>
    <experiments>2</experiments>
</comment>
<comment type="interaction">
    <interactant intactId="EBI-542683">
        <id>P0AFG8</id>
    </interactant>
    <interactant intactId="EBI-558722">
        <id>P05100</id>
        <label>tag</label>
    </interactant>
    <organismsDiffer>false</organismsDiffer>
    <experiments>2</experiments>
</comment>
<comment type="interaction">
    <interactant intactId="EBI-542683">
        <id>P0AFG8</id>
    </interactant>
    <interactant intactId="EBI-559360">
        <id>P26602</id>
        <label>ubiC</label>
    </interactant>
    <organismsDiffer>false</organismsDiffer>
    <experiments>2</experiments>
</comment>
<comment type="interaction">
    <interactant intactId="EBI-542683">
        <id>P0AFG8</id>
    </interactant>
    <interactant intactId="EBI-547696">
        <id>P0A9U1</id>
        <label>ybhF</label>
    </interactant>
    <organismsDiffer>false</organismsDiffer>
    <experiments>3</experiments>
</comment>
<comment type="interaction">
    <interactant intactId="EBI-542683">
        <id>P0AFG8</id>
    </interactant>
    <interactant intactId="EBI-544511">
        <id>P0A8L7</id>
        <label>yciU</label>
    </interactant>
    <organismsDiffer>false</organismsDiffer>
    <experiments>3</experiments>
</comment>
<comment type="interaction">
    <interactant intactId="EBI-542683">
        <id>P0AFG8</id>
    </interactant>
    <interactant intactId="EBI-544654">
        <id>P76049</id>
        <label>ycjY</label>
    </interactant>
    <organismsDiffer>false</organismsDiffer>
    <experiments>2</experiments>
</comment>
<comment type="interaction">
    <interactant intactId="EBI-542683">
        <id>P0AFG8</id>
    </interactant>
    <interactant intactId="EBI-544774">
        <id>P76170</id>
        <label>ynfB</label>
    </interactant>
    <organismsDiffer>false</organismsDiffer>
    <experiments>2</experiments>
</comment>
<gene>
    <name type="primary">aceE</name>
    <name type="ordered locus">b0114</name>
    <name type="ordered locus">JW0110</name>
</gene>
<organism>
    <name type="scientific">Escherichia coli (strain K12)</name>
    <dbReference type="NCBI Taxonomy" id="83333"/>
    <lineage>
        <taxon>Bacteria</taxon>
        <taxon>Pseudomonadati</taxon>
        <taxon>Pseudomonadota</taxon>
        <taxon>Gammaproteobacteria</taxon>
        <taxon>Enterobacterales</taxon>
        <taxon>Enterobacteriaceae</taxon>
        <taxon>Escherichia</taxon>
    </lineage>
</organism>
<feature type="initiator methionine" description="Removed" evidence="4">
    <location>
        <position position="1"/>
    </location>
</feature>
<feature type="chain" id="PRO_0000162243" description="Pyruvate dehydrogenase E1 component">
    <location>
        <begin position="2"/>
        <end position="887"/>
    </location>
</feature>
<feature type="binding site">
    <location>
        <position position="231"/>
    </location>
    <ligand>
        <name>Mg(2+)</name>
        <dbReference type="ChEBI" id="CHEBI:18420"/>
    </ligand>
</feature>
<feature type="binding site">
    <location>
        <position position="261"/>
    </location>
    <ligand>
        <name>Mg(2+)</name>
        <dbReference type="ChEBI" id="CHEBI:18420"/>
    </ligand>
</feature>
<feature type="binding site">
    <location>
        <position position="263"/>
    </location>
    <ligand>
        <name>Mg(2+)</name>
        <dbReference type="ChEBI" id="CHEBI:18420"/>
    </ligand>
</feature>
<feature type="modified residue" description="N6-acetyllysine" evidence="2">
    <location>
        <position position="716"/>
    </location>
</feature>
<feature type="sequence conflict" description="In Ref. 1; CAA24740." evidence="5" ref="1">
    <original>P</original>
    <variation>R</variation>
    <location>
        <position position="146"/>
    </location>
</feature>
<feature type="sequence conflict" description="In Ref. 1; CAA24740." evidence="5" ref="1">
    <location>
        <position position="276"/>
    </location>
</feature>
<feature type="helix" evidence="12">
    <location>
        <begin position="66"/>
        <end position="68"/>
    </location>
</feature>
<feature type="helix" evidence="12">
    <location>
        <begin position="76"/>
        <end position="99"/>
    </location>
</feature>
<feature type="helix" evidence="12">
    <location>
        <begin position="109"/>
        <end position="124"/>
    </location>
</feature>
<feature type="strand" evidence="12">
    <location>
        <begin position="131"/>
        <end position="133"/>
    </location>
</feature>
<feature type="strand" evidence="12">
    <location>
        <begin position="137"/>
        <end position="139"/>
    </location>
</feature>
<feature type="helix" evidence="12">
    <location>
        <begin position="142"/>
        <end position="144"/>
    </location>
</feature>
<feature type="helix" evidence="12">
    <location>
        <begin position="145"/>
        <end position="154"/>
    </location>
</feature>
<feature type="helix" evidence="12">
    <location>
        <begin position="160"/>
        <end position="163"/>
    </location>
</feature>
<feature type="turn" evidence="12">
    <location>
        <begin position="181"/>
        <end position="183"/>
    </location>
</feature>
<feature type="turn" evidence="12">
    <location>
        <begin position="185"/>
        <end position="187"/>
    </location>
</feature>
<feature type="helix" evidence="12">
    <location>
        <begin position="197"/>
        <end position="214"/>
    </location>
</feature>
<feature type="strand" evidence="12">
    <location>
        <begin position="225"/>
        <end position="230"/>
    </location>
</feature>
<feature type="helix" evidence="12">
    <location>
        <begin position="232"/>
        <end position="235"/>
    </location>
</feature>
<feature type="helix" evidence="12">
    <location>
        <begin position="237"/>
        <end position="240"/>
    </location>
</feature>
<feature type="helix" evidence="12">
    <location>
        <begin position="243"/>
        <end position="248"/>
    </location>
</feature>
<feature type="strand" evidence="12">
    <location>
        <begin position="254"/>
        <end position="260"/>
    </location>
</feature>
<feature type="strand" evidence="8">
    <location>
        <begin position="262"/>
        <end position="264"/>
    </location>
</feature>
<feature type="strand" evidence="12">
    <location>
        <begin position="265"/>
        <end position="269"/>
    </location>
</feature>
<feature type="helix" evidence="12">
    <location>
        <begin position="275"/>
        <end position="285"/>
    </location>
</feature>
<feature type="strand" evidence="12">
    <location>
        <begin position="289"/>
        <end position="293"/>
    </location>
</feature>
<feature type="helix" evidence="12">
    <location>
        <begin position="299"/>
        <end position="305"/>
    </location>
</feature>
<feature type="helix" evidence="12">
    <location>
        <begin position="310"/>
        <end position="317"/>
    </location>
</feature>
<feature type="helix" evidence="12">
    <location>
        <begin position="320"/>
        <end position="326"/>
    </location>
</feature>
<feature type="helix" evidence="12">
    <location>
        <begin position="331"/>
        <end position="337"/>
    </location>
</feature>
<feature type="strand" evidence="12">
    <location>
        <begin position="339"/>
        <end position="342"/>
    </location>
</feature>
<feature type="helix" evidence="12">
    <location>
        <begin position="343"/>
        <end position="346"/>
    </location>
</feature>
<feature type="turn" evidence="12">
    <location>
        <begin position="347"/>
        <end position="351"/>
    </location>
</feature>
<feature type="helix" evidence="12">
    <location>
        <begin position="354"/>
        <end position="358"/>
    </location>
</feature>
<feature type="helix" evidence="12">
    <location>
        <begin position="363"/>
        <end position="365"/>
    </location>
</feature>
<feature type="helix" evidence="12">
    <location>
        <begin position="367"/>
        <end position="379"/>
    </location>
</feature>
<feature type="strand" evidence="12">
    <location>
        <begin position="385"/>
        <end position="390"/>
    </location>
</feature>
<feature type="turn" evidence="12">
    <location>
        <begin position="393"/>
        <end position="396"/>
    </location>
</feature>
<feature type="turn" evidence="11">
    <location>
        <begin position="398"/>
        <end position="400"/>
    </location>
</feature>
<feature type="turn" evidence="9">
    <location>
        <begin position="401"/>
        <end position="403"/>
    </location>
</feature>
<feature type="helix" evidence="9">
    <location>
        <begin position="407"/>
        <end position="409"/>
    </location>
</feature>
<feature type="helix" evidence="12">
    <location>
        <begin position="416"/>
        <end position="424"/>
    </location>
</feature>
<feature type="helix" evidence="12">
    <location>
        <begin position="431"/>
        <end position="434"/>
    </location>
</feature>
<feature type="helix" evidence="12">
    <location>
        <begin position="447"/>
        <end position="458"/>
    </location>
</feature>
<feature type="helix" evidence="12">
    <location>
        <begin position="479"/>
        <end position="482"/>
    </location>
</feature>
<feature type="helix" evidence="12">
    <location>
        <begin position="483"/>
        <end position="486"/>
    </location>
</feature>
<feature type="helix" evidence="12">
    <location>
        <begin position="495"/>
        <end position="506"/>
    </location>
</feature>
<feature type="turn" evidence="12">
    <location>
        <begin position="510"/>
        <end position="515"/>
    </location>
</feature>
<feature type="strand" evidence="12">
    <location>
        <begin position="516"/>
        <end position="522"/>
    </location>
</feature>
<feature type="helix" evidence="12">
    <location>
        <begin position="525"/>
        <end position="527"/>
    </location>
</feature>
<feature type="helix" evidence="12">
    <location>
        <begin position="530"/>
        <end position="536"/>
    </location>
</feature>
<feature type="turn" evidence="9">
    <location>
        <begin position="549"/>
        <end position="552"/>
    </location>
</feature>
<feature type="strand" evidence="9">
    <location>
        <begin position="553"/>
        <end position="555"/>
    </location>
</feature>
<feature type="strand" evidence="12">
    <location>
        <begin position="565"/>
        <end position="567"/>
    </location>
</feature>
<feature type="helix" evidence="12">
    <location>
        <begin position="572"/>
        <end position="583"/>
    </location>
</feature>
<feature type="helix" evidence="12">
    <location>
        <begin position="585"/>
        <end position="588"/>
    </location>
</feature>
<feature type="strand" evidence="12">
    <location>
        <begin position="594"/>
        <end position="600"/>
    </location>
</feature>
<feature type="helix" evidence="12">
    <location>
        <begin position="601"/>
        <end position="603"/>
    </location>
</feature>
<feature type="helix" evidence="12">
    <location>
        <begin position="605"/>
        <end position="617"/>
    </location>
</feature>
<feature type="strand" evidence="12">
    <location>
        <begin position="623"/>
        <end position="628"/>
    </location>
</feature>
<feature type="turn" evidence="12">
    <location>
        <begin position="631"/>
        <end position="633"/>
    </location>
</feature>
<feature type="turn" evidence="12">
    <location>
        <begin position="635"/>
        <end position="637"/>
    </location>
</feature>
<feature type="turn" evidence="12">
    <location>
        <begin position="639"/>
        <end position="641"/>
    </location>
</feature>
<feature type="helix" evidence="12">
    <location>
        <begin position="646"/>
        <end position="650"/>
    </location>
</feature>
<feature type="strand" evidence="12">
    <location>
        <begin position="656"/>
        <end position="659"/>
    </location>
</feature>
<feature type="helix" evidence="12">
    <location>
        <begin position="664"/>
        <end position="679"/>
    </location>
</feature>
<feature type="strand" evidence="12">
    <location>
        <begin position="687"/>
        <end position="691"/>
    </location>
</feature>
<feature type="turn" evidence="8">
    <location>
        <begin position="704"/>
        <end position="706"/>
    </location>
</feature>
<feature type="helix" evidence="12">
    <location>
        <begin position="707"/>
        <end position="712"/>
    </location>
</feature>
<feature type="strand" evidence="12">
    <location>
        <begin position="715"/>
        <end position="720"/>
    </location>
</feature>
<feature type="strand" evidence="12">
    <location>
        <begin position="723"/>
        <end position="731"/>
    </location>
</feature>
<feature type="helix" evidence="12">
    <location>
        <begin position="733"/>
        <end position="735"/>
    </location>
</feature>
<feature type="helix" evidence="12">
    <location>
        <begin position="736"/>
        <end position="750"/>
    </location>
</feature>
<feature type="strand" evidence="12">
    <location>
        <begin position="752"/>
        <end position="758"/>
    </location>
</feature>
<feature type="helix" evidence="12">
    <location>
        <begin position="762"/>
        <end position="778"/>
    </location>
</feature>
<feature type="helix" evidence="12">
    <location>
        <begin position="788"/>
        <end position="792"/>
    </location>
</feature>
<feature type="strand" evidence="12">
    <location>
        <begin position="798"/>
        <end position="801"/>
    </location>
</feature>
<feature type="helix" evidence="12">
    <location>
        <begin position="807"/>
        <end position="810"/>
    </location>
</feature>
<feature type="helix" evidence="12">
    <location>
        <begin position="811"/>
        <end position="815"/>
    </location>
</feature>
<feature type="strand" evidence="11">
    <location>
        <begin position="817"/>
        <end position="819"/>
    </location>
</feature>
<feature type="strand" evidence="12">
    <location>
        <begin position="821"/>
        <end position="824"/>
    </location>
</feature>
<feature type="helix" evidence="12">
    <location>
        <begin position="835"/>
        <end position="841"/>
    </location>
</feature>
<feature type="helix" evidence="12">
    <location>
        <begin position="846"/>
        <end position="859"/>
    </location>
</feature>
<feature type="strand" evidence="10">
    <location>
        <begin position="861"/>
        <end position="863"/>
    </location>
</feature>
<feature type="helix" evidence="12">
    <location>
        <begin position="865"/>
        <end position="874"/>
    </location>
</feature>
<feature type="turn" evidence="12">
    <location>
        <begin position="884"/>
        <end position="886"/>
    </location>
</feature>
<accession>P0AFG8</accession>
<accession>P06958</accession>
<accession>P78049</accession>
<accession>Q53382</accession>
<reference key="1">
    <citation type="journal article" date="1983" name="Eur. J. Biochem.">
        <title>The pyruvate dehydrogenase complex of Escherichia coli K12. Nucleotide sequence encoding the pyruvate dehydrogenase component.</title>
        <authorList>
            <person name="Stephens P.E."/>
            <person name="Darlison M.G."/>
            <person name="Lewis H.M."/>
            <person name="Guest J.R."/>
        </authorList>
    </citation>
    <scope>NUCLEOTIDE SEQUENCE [GENOMIC DNA]</scope>
    <source>
        <strain>K12</strain>
    </source>
</reference>
<reference key="2">
    <citation type="journal article" date="1994" name="Nucleic Acids Res.">
        <title>Systematic sequencing of the Escherichia coli genome: analysis of the 2.4-4.1 min (110,917-193,643 bp) region.</title>
        <authorList>
            <person name="Fujita N."/>
            <person name="Mori H."/>
            <person name="Yura T."/>
            <person name="Ishihama A."/>
        </authorList>
    </citation>
    <scope>NUCLEOTIDE SEQUENCE [LARGE SCALE GENOMIC DNA]</scope>
    <source>
        <strain>K12 / W3110 / ATCC 27325 / DSM 5911</strain>
    </source>
</reference>
<reference key="3">
    <citation type="journal article" date="1997" name="Science">
        <title>The complete genome sequence of Escherichia coli K-12.</title>
        <authorList>
            <person name="Blattner F.R."/>
            <person name="Plunkett G. III"/>
            <person name="Bloch C.A."/>
            <person name="Perna N.T."/>
            <person name="Burland V."/>
            <person name="Riley M."/>
            <person name="Collado-Vides J."/>
            <person name="Glasner J.D."/>
            <person name="Rode C.K."/>
            <person name="Mayhew G.F."/>
            <person name="Gregor J."/>
            <person name="Davis N.W."/>
            <person name="Kirkpatrick H.A."/>
            <person name="Goeden M.A."/>
            <person name="Rose D.J."/>
            <person name="Mau B."/>
            <person name="Shao Y."/>
        </authorList>
    </citation>
    <scope>NUCLEOTIDE SEQUENCE [LARGE SCALE GENOMIC DNA]</scope>
    <source>
        <strain>K12 / MG1655 / ATCC 47076</strain>
    </source>
</reference>
<reference key="4">
    <citation type="journal article" date="2006" name="Mol. Syst. Biol.">
        <title>Highly accurate genome sequences of Escherichia coli K-12 strains MG1655 and W3110.</title>
        <authorList>
            <person name="Hayashi K."/>
            <person name="Morooka N."/>
            <person name="Yamamoto Y."/>
            <person name="Fujita K."/>
            <person name="Isono K."/>
            <person name="Choi S."/>
            <person name="Ohtsubo E."/>
            <person name="Baba T."/>
            <person name="Wanner B.L."/>
            <person name="Mori H."/>
            <person name="Horiuchi T."/>
        </authorList>
    </citation>
    <scope>NUCLEOTIDE SEQUENCE [LARGE SCALE GENOMIC DNA]</scope>
    <scope>SEQUENCE REVISION TO 145 AND 275</scope>
    <source>
        <strain>K12 / W3110 / ATCC 27325 / DSM 5911</strain>
    </source>
</reference>
<reference key="5">
    <citation type="journal article" date="1993" name="FEBS Lett.">
        <title>A mutation causing constitutive synthesis of the pyruvate dehydrogenase complex in Escherichia coli is located within the pdhR gene.</title>
        <authorList>
            <person name="Haydon D.J."/>
            <person name="Quail M.A."/>
            <person name="Guest J.R."/>
        </authorList>
    </citation>
    <scope>NUCLEOTIDE SEQUENCE [GENOMIC DNA] OF 1-23</scope>
    <source>
        <strain>K12</strain>
    </source>
</reference>
<reference key="6">
    <citation type="journal article" date="1997" name="Electrophoresis">
        <title>Comparing the predicted and observed properties of proteins encoded in the genome of Escherichia coli K-12.</title>
        <authorList>
            <person name="Link A.J."/>
            <person name="Robison K."/>
            <person name="Church G.M."/>
        </authorList>
    </citation>
    <scope>PROTEIN SEQUENCE OF 2-13</scope>
    <source>
        <strain>K12 / EMG2</strain>
    </source>
</reference>
<reference key="7">
    <citation type="journal article" date="1997" name="Electrophoresis">
        <title>Escherichia coli proteome analysis using the gene-protein database.</title>
        <authorList>
            <person name="VanBogelen R.A."/>
            <person name="Abshire K.Z."/>
            <person name="Moldover B."/>
            <person name="Olson E.R."/>
            <person name="Neidhardt F.C."/>
        </authorList>
    </citation>
    <scope>IDENTIFICATION BY 2D-GEL</scope>
</reference>
<reference key="8">
    <citation type="journal article" date="2009" name="Mol. Cell. Proteomics">
        <title>Lysine acetylation is a highly abundant and evolutionarily conserved modification in Escherichia coli.</title>
        <authorList>
            <person name="Zhang J."/>
            <person name="Sprung R."/>
            <person name="Pei J."/>
            <person name="Tan X."/>
            <person name="Kim S."/>
            <person name="Zhu H."/>
            <person name="Liu C.F."/>
            <person name="Grishin N.V."/>
            <person name="Zhao Y."/>
        </authorList>
    </citation>
    <scope>ACETYLATION [LARGE SCALE ANALYSIS] AT LYS-716</scope>
    <scope>IDENTIFICATION BY MASS SPECTROMETRY</scope>
    <source>
        <strain>K12 / JW1106</strain>
        <strain>K12 / MG1655 / ATCC 47076</strain>
    </source>
</reference>
<reference key="9">
    <citation type="journal article" date="2018" name="Int. J. Biol. Macromol.">
        <title>Identification of functional interactome of a key cell division regulatory protein CedA of E.coli.</title>
        <authorList>
            <person name="Sharma P."/>
            <person name="Tomar A.K."/>
            <person name="Kundu B."/>
        </authorList>
    </citation>
    <scope>INTERACTION WITH CEDA</scope>
</reference>
<reference key="10">
    <citation type="journal article" date="2002" name="Biochemistry">
        <title>Structure of the pyruvate dehydrogenase multienzyme complex E1 component from Escherichia coli at 1.85 A resolution.</title>
        <authorList>
            <person name="Arjunan P."/>
            <person name="Nemeria N."/>
            <person name="Brunskill A."/>
            <person name="Chandrasekhar K."/>
            <person name="Sax M."/>
            <person name="Yan Y."/>
            <person name="Jordan F."/>
            <person name="Guest J.R."/>
            <person name="Furey W."/>
        </authorList>
    </citation>
    <scope>X-RAY CRYSTALLOGRAPHY (1.85 ANGSTROMS)</scope>
    <scope>SUBUNIT</scope>
</reference>
<protein>
    <recommendedName>
        <fullName>Pyruvate dehydrogenase E1 component</fullName>
        <shortName>PDH E1 component</shortName>
        <ecNumber>1.2.4.1</ecNumber>
    </recommendedName>
</protein>
<dbReference type="EC" id="1.2.4.1"/>
<dbReference type="EMBL" id="V01498">
    <property type="protein sequence ID" value="CAA24740.1"/>
    <property type="molecule type" value="Genomic_DNA"/>
</dbReference>
<dbReference type="EMBL" id="U00096">
    <property type="protein sequence ID" value="AAC73225.1"/>
    <property type="molecule type" value="Genomic_DNA"/>
</dbReference>
<dbReference type="EMBL" id="AP009048">
    <property type="protein sequence ID" value="BAB96684.2"/>
    <property type="molecule type" value="Genomic_DNA"/>
</dbReference>
<dbReference type="EMBL" id="S67363">
    <property type="protein sequence ID" value="AAB29357.1"/>
    <property type="molecule type" value="Genomic_DNA"/>
</dbReference>
<dbReference type="PIR" id="B64734">
    <property type="entry name" value="DEECPV"/>
</dbReference>
<dbReference type="RefSeq" id="NP_414656.1">
    <property type="nucleotide sequence ID" value="NC_000913.3"/>
</dbReference>
<dbReference type="RefSeq" id="WP_000003820.1">
    <property type="nucleotide sequence ID" value="NZ_STEB01000010.1"/>
</dbReference>
<dbReference type="PDB" id="1L8A">
    <property type="method" value="X-ray"/>
    <property type="resolution" value="1.85 A"/>
    <property type="chains" value="A/B=2-887"/>
</dbReference>
<dbReference type="PDB" id="1RP7">
    <property type="method" value="X-ray"/>
    <property type="resolution" value="2.09 A"/>
    <property type="chains" value="A/B=2-887"/>
</dbReference>
<dbReference type="PDB" id="2G25">
    <property type="method" value="X-ray"/>
    <property type="resolution" value="2.10 A"/>
    <property type="chains" value="A/B=2-887"/>
</dbReference>
<dbReference type="PDB" id="2G28">
    <property type="method" value="X-ray"/>
    <property type="resolution" value="1.85 A"/>
    <property type="chains" value="A/B=2-887"/>
</dbReference>
<dbReference type="PDB" id="2G67">
    <property type="method" value="X-ray"/>
    <property type="resolution" value="2.32 A"/>
    <property type="chains" value="A/B=2-887"/>
</dbReference>
<dbReference type="PDB" id="2IEA">
    <property type="method" value="X-ray"/>
    <property type="resolution" value="1.85 A"/>
    <property type="chains" value="A/B=2-887"/>
</dbReference>
<dbReference type="PDB" id="2QTA">
    <property type="method" value="X-ray"/>
    <property type="resolution" value="1.85 A"/>
    <property type="chains" value="A/B=2-887"/>
</dbReference>
<dbReference type="PDB" id="2QTC">
    <property type="method" value="X-ray"/>
    <property type="resolution" value="1.77 A"/>
    <property type="chains" value="A/B=2-887"/>
</dbReference>
<dbReference type="PDBsum" id="1L8A"/>
<dbReference type="PDBsum" id="1RP7"/>
<dbReference type="PDBsum" id="2G25"/>
<dbReference type="PDBsum" id="2G28"/>
<dbReference type="PDBsum" id="2G67"/>
<dbReference type="PDBsum" id="2IEA"/>
<dbReference type="PDBsum" id="2QTA"/>
<dbReference type="PDBsum" id="2QTC"/>
<dbReference type="SMR" id="P0AFG8"/>
<dbReference type="BioGRID" id="4261303">
    <property type="interactions" value="40"/>
</dbReference>
<dbReference type="BioGRID" id="849234">
    <property type="interactions" value="3"/>
</dbReference>
<dbReference type="ComplexPortal" id="CPX-3943">
    <property type="entry name" value="Pyruvate dehydrogenase complex"/>
</dbReference>
<dbReference type="DIP" id="DIP-9039N"/>
<dbReference type="FunCoup" id="P0AFG8">
    <property type="interactions" value="788"/>
</dbReference>
<dbReference type="IntAct" id="P0AFG8">
    <property type="interactions" value="104"/>
</dbReference>
<dbReference type="STRING" id="511145.b0114"/>
<dbReference type="DrugBank" id="DB01987">
    <property type="generic name" value="Cocarboxylase"/>
</dbReference>
<dbReference type="DrugBank" id="DB00152">
    <property type="generic name" value="Thiamine"/>
</dbReference>
<dbReference type="CarbonylDB" id="P0AFG8"/>
<dbReference type="iPTMnet" id="P0AFG8"/>
<dbReference type="jPOST" id="P0AFG8"/>
<dbReference type="PaxDb" id="511145-b0114"/>
<dbReference type="EnsemblBacteria" id="AAC73225">
    <property type="protein sequence ID" value="AAC73225"/>
    <property type="gene ID" value="b0114"/>
</dbReference>
<dbReference type="GeneID" id="75202071"/>
<dbReference type="GeneID" id="944834"/>
<dbReference type="KEGG" id="ecj:JW0110"/>
<dbReference type="KEGG" id="eco:b0114"/>
<dbReference type="KEGG" id="ecoc:C3026_00475"/>
<dbReference type="PATRIC" id="fig|1411691.4.peg.2168"/>
<dbReference type="EchoBASE" id="EB0023"/>
<dbReference type="eggNOG" id="COG2609">
    <property type="taxonomic scope" value="Bacteria"/>
</dbReference>
<dbReference type="HOGENOM" id="CLU_009154_2_0_6"/>
<dbReference type="InParanoid" id="P0AFG8"/>
<dbReference type="OMA" id="WSVTSYK"/>
<dbReference type="OrthoDB" id="9759664at2"/>
<dbReference type="PhylomeDB" id="P0AFG8"/>
<dbReference type="BioCyc" id="EcoCyc:E1P-MONOMER"/>
<dbReference type="BioCyc" id="MetaCyc:E1P-MONOMER"/>
<dbReference type="BRENDA" id="1.2.1.104">
    <property type="organism ID" value="2026"/>
</dbReference>
<dbReference type="BRENDA" id="1.2.4.1">
    <property type="organism ID" value="2026"/>
</dbReference>
<dbReference type="SABIO-RK" id="P0AFG8"/>
<dbReference type="EvolutionaryTrace" id="P0AFG8"/>
<dbReference type="PRO" id="PR:P0AFG8"/>
<dbReference type="Proteomes" id="UP000000625">
    <property type="component" value="Chromosome"/>
</dbReference>
<dbReference type="GO" id="GO:0005829">
    <property type="term" value="C:cytosol"/>
    <property type="evidence" value="ECO:0007005"/>
    <property type="project" value="UniProtKB"/>
</dbReference>
<dbReference type="GO" id="GO:0016020">
    <property type="term" value="C:membrane"/>
    <property type="evidence" value="ECO:0007005"/>
    <property type="project" value="UniProtKB"/>
</dbReference>
<dbReference type="GO" id="GO:0045254">
    <property type="term" value="C:pyruvate dehydrogenase complex"/>
    <property type="evidence" value="ECO:0000303"/>
    <property type="project" value="ComplexPortal"/>
</dbReference>
<dbReference type="GO" id="GO:0042802">
    <property type="term" value="F:identical protein binding"/>
    <property type="evidence" value="ECO:0000353"/>
    <property type="project" value="IntAct"/>
</dbReference>
<dbReference type="GO" id="GO:0000287">
    <property type="term" value="F:magnesium ion binding"/>
    <property type="evidence" value="ECO:0000314"/>
    <property type="project" value="CAFA"/>
</dbReference>
<dbReference type="GO" id="GO:0060090">
    <property type="term" value="F:molecular adaptor activity"/>
    <property type="evidence" value="ECO:0000269"/>
    <property type="project" value="DisProt"/>
</dbReference>
<dbReference type="GO" id="GO:0042803">
    <property type="term" value="F:protein homodimerization activity"/>
    <property type="evidence" value="ECO:0000314"/>
    <property type="project" value="CAFA"/>
</dbReference>
<dbReference type="GO" id="GO:0004739">
    <property type="term" value="F:pyruvate dehydrogenase (acetyl-transferring) activity"/>
    <property type="evidence" value="ECO:0007669"/>
    <property type="project" value="UniProtKB-EC"/>
</dbReference>
<dbReference type="GO" id="GO:0004738">
    <property type="term" value="F:pyruvate dehydrogenase activity"/>
    <property type="evidence" value="ECO:0000316"/>
    <property type="project" value="EcoliWiki"/>
</dbReference>
<dbReference type="GO" id="GO:0036094">
    <property type="term" value="F:small molecule binding"/>
    <property type="evidence" value="ECO:0000269"/>
    <property type="project" value="DisProt"/>
</dbReference>
<dbReference type="GO" id="GO:0030976">
    <property type="term" value="F:thiamine pyrophosphate binding"/>
    <property type="evidence" value="ECO:0000314"/>
    <property type="project" value="CAFA"/>
</dbReference>
<dbReference type="GO" id="GO:0042867">
    <property type="term" value="P:pyruvate catabolic process"/>
    <property type="evidence" value="ECO:0000303"/>
    <property type="project" value="ComplexPortal"/>
</dbReference>
<dbReference type="CDD" id="cd02017">
    <property type="entry name" value="TPP_E1_EcPDC_like"/>
    <property type="match status" value="1"/>
</dbReference>
<dbReference type="DisProt" id="DP00427"/>
<dbReference type="FunFam" id="3.40.50.920:FF:000005">
    <property type="entry name" value="Pyruvate dehydrogenase E1 component"/>
    <property type="match status" value="1"/>
</dbReference>
<dbReference type="FunFam" id="3.40.50.970:FF:000009">
    <property type="entry name" value="Pyruvate dehydrogenase E1 component"/>
    <property type="match status" value="1"/>
</dbReference>
<dbReference type="FunFam" id="3.40.50.970:FF:000011">
    <property type="entry name" value="Pyruvate dehydrogenase E1 component"/>
    <property type="match status" value="1"/>
</dbReference>
<dbReference type="Gene3D" id="3.40.50.920">
    <property type="match status" value="1"/>
</dbReference>
<dbReference type="Gene3D" id="3.40.50.970">
    <property type="match status" value="2"/>
</dbReference>
<dbReference type="InterPro" id="IPR035807">
    <property type="entry name" value="PDC_E1_N"/>
</dbReference>
<dbReference type="InterPro" id="IPR051157">
    <property type="entry name" value="PDH/Transketolase"/>
</dbReference>
<dbReference type="InterPro" id="IPR004660">
    <property type="entry name" value="PDH_E1"/>
</dbReference>
<dbReference type="InterPro" id="IPR041621">
    <property type="entry name" value="PDH_E1_M"/>
</dbReference>
<dbReference type="InterPro" id="IPR029061">
    <property type="entry name" value="THDP-binding"/>
</dbReference>
<dbReference type="InterPro" id="IPR009014">
    <property type="entry name" value="Transketo_C/PFOR_II"/>
</dbReference>
<dbReference type="InterPro" id="IPR055152">
    <property type="entry name" value="Transketolase-like_C_2"/>
</dbReference>
<dbReference type="InterPro" id="IPR005474">
    <property type="entry name" value="Transketolase_N"/>
</dbReference>
<dbReference type="NCBIfam" id="TIGR00759">
    <property type="entry name" value="aceE"/>
    <property type="match status" value="1"/>
</dbReference>
<dbReference type="PANTHER" id="PTHR43825">
    <property type="entry name" value="PYRUVATE DEHYDROGENASE E1 COMPONENT"/>
    <property type="match status" value="1"/>
</dbReference>
<dbReference type="PANTHER" id="PTHR43825:SF3">
    <property type="entry name" value="PYRUVATE DEHYDROGENASE E1 COMPONENT"/>
    <property type="match status" value="1"/>
</dbReference>
<dbReference type="Pfam" id="PF17831">
    <property type="entry name" value="PDH_E1_M"/>
    <property type="match status" value="1"/>
</dbReference>
<dbReference type="Pfam" id="PF22613">
    <property type="entry name" value="Transketolase_C_1"/>
    <property type="match status" value="1"/>
</dbReference>
<dbReference type="Pfam" id="PF00456">
    <property type="entry name" value="Transketolase_N"/>
    <property type="match status" value="1"/>
</dbReference>
<dbReference type="PIRSF" id="PIRSF000156">
    <property type="entry name" value="Pyruvate_dh_E1"/>
    <property type="match status" value="1"/>
</dbReference>
<dbReference type="SUPFAM" id="SSF52518">
    <property type="entry name" value="Thiamin diphosphate-binding fold (THDP-binding)"/>
    <property type="match status" value="2"/>
</dbReference>
<dbReference type="SUPFAM" id="SSF52922">
    <property type="entry name" value="TK C-terminal domain-like"/>
    <property type="match status" value="1"/>
</dbReference>
<name>ODP1_ECOLI</name>
<keyword id="KW-0002">3D-structure</keyword>
<keyword id="KW-0007">Acetylation</keyword>
<keyword id="KW-0903">Direct protein sequencing</keyword>
<keyword id="KW-0460">Magnesium</keyword>
<keyword id="KW-0479">Metal-binding</keyword>
<keyword id="KW-0560">Oxidoreductase</keyword>
<keyword id="KW-0670">Pyruvate</keyword>
<keyword id="KW-1185">Reference proteome</keyword>
<keyword id="KW-0786">Thiamine pyrophosphate</keyword>
<evidence type="ECO:0000269" key="1">
    <source>
    </source>
</evidence>
<evidence type="ECO:0000269" key="2">
    <source>
    </source>
</evidence>
<evidence type="ECO:0000269" key="3">
    <source>
    </source>
</evidence>
<evidence type="ECO:0000269" key="4">
    <source>
    </source>
</evidence>
<evidence type="ECO:0000305" key="5"/>
<evidence type="ECO:0000305" key="6">
    <source>
    </source>
</evidence>
<evidence type="ECO:0000305" key="7">
    <source>
    </source>
</evidence>
<evidence type="ECO:0007829" key="8">
    <source>
        <dbReference type="PDB" id="1L8A"/>
    </source>
</evidence>
<evidence type="ECO:0007829" key="9">
    <source>
        <dbReference type="PDB" id="2G25"/>
    </source>
</evidence>
<evidence type="ECO:0007829" key="10">
    <source>
        <dbReference type="PDB" id="2G67"/>
    </source>
</evidence>
<evidence type="ECO:0007829" key="11">
    <source>
        <dbReference type="PDB" id="2QTA"/>
    </source>
</evidence>
<evidence type="ECO:0007829" key="12">
    <source>
        <dbReference type="PDB" id="2QTC"/>
    </source>
</evidence>
<sequence>MSERFPNDVDPIETRDWLQAIESVIREEGVERAQYLIDQLLAEARKGGVNVAAGTGISNYINTIPVEEQPEYPGNLELERRIRSAIRWNAIMTVLRASKKDLELGGHMASFQSSATIYDVCFNHFFRARNEQDGGDLVYFQGHISPGVYARAFLEGRLTQEQLDNFRQEVHGNGLSSYPHPKLMPEFWQFPTVSMGLGPIGAIYQAKFLKYLEHRGLKDTSKQTVYAFLGDGEMDEPESKGAITIATREKLDNLVFVINCNLQRLDGPVTGNGKIINELEGIFEGAGWNVIKVMWGSRWDELLRKDTSGKLIQLMNETVDGDYQTFKSKDGAYVREHFFGKYPETAALVADWTDEQIWALNRGGHDPKKIYAAFKKAQETKGKATVILAHTIKGYGMGDAAEGKNIAHQVKKMNMDGVRHIRDRFNVPVSDADIEKLPYITFPEGSEEHTYLHAQRQKLHGYLPSRQPNFTEKLELPSLQDFGALLEEQSKEISTTIAFVRALNVMLKNKSIKDRLVPIIADEARTFGMEGLFRQIGIYSPNGQQYTPQDREQVAYYKEDEKGQILQEGINELGAGCSWLAAATSYSTNNLPMIPFYIYYSMFGFQRIGDLCWAAGDQQARGFLIGGTSGRTTLNGEGLQHEDGHSHIQSLTIPNCISYDPAYAYEVAVIMHDGLERMYGEKQENVYYYITTLNENYHMPAMPEGAEEGIRKGIYKLETIEGSKGKVQLLGSGSILRHVREAAEILAKDYGVGSDVYSVTSFTELARDGQDCERWNMLHPLETPRVPYIAQVMNDAPAVASTDYMKLFAEQVRTYVPADDYRVLGTDGFGRSDSRENLRHHFEVDASYVVVAALGELAKRGEIDKKVVADAIAKFNIDADKVNPRLA</sequence>
<proteinExistence type="evidence at protein level"/>